<evidence type="ECO:0000250" key="1">
    <source>
        <dbReference type="UniProtKB" id="P32378"/>
    </source>
</evidence>
<evidence type="ECO:0000255" key="2"/>
<evidence type="ECO:0000255" key="3">
    <source>
        <dbReference type="PROSITE-ProRule" id="PRU00498"/>
    </source>
</evidence>
<evidence type="ECO:0000269" key="4">
    <source>
    </source>
</evidence>
<evidence type="ECO:0000303" key="5">
    <source>
    </source>
</evidence>
<evidence type="ECO:0000305" key="6"/>
<evidence type="ECO:0000305" key="7">
    <source>
    </source>
</evidence>
<organism>
    <name type="scientific">Arthrinium sp</name>
    <dbReference type="NCBI Taxonomy" id="1756131"/>
    <lineage>
        <taxon>Eukaryota</taxon>
        <taxon>Fungi</taxon>
        <taxon>Dikarya</taxon>
        <taxon>Ascomycota</taxon>
        <taxon>Pezizomycotina</taxon>
        <taxon>Sordariomycetes</taxon>
        <taxon>Xylariomycetidae</taxon>
        <taxon>Amphisphaeriales</taxon>
        <taxon>Apiosporaceae</taxon>
        <taxon>Arthrinium</taxon>
    </lineage>
</organism>
<name>ATNF_ARTSZ</name>
<proteinExistence type="evidence at transcript level"/>
<protein>
    <recommendedName>
        <fullName evidence="5">Polyprenyl transferase atnF</fullName>
        <ecNumber evidence="7">2.5.1.-</ecNumber>
    </recommendedName>
    <alternativeName>
        <fullName evidence="5">Arthripenoid biosynthesis cluster protein F</fullName>
    </alternativeName>
</protein>
<keyword id="KW-0325">Glycoprotein</keyword>
<keyword id="KW-0472">Membrane</keyword>
<keyword id="KW-0808">Transferase</keyword>
<keyword id="KW-0812">Transmembrane</keyword>
<keyword id="KW-1133">Transmembrane helix</keyword>
<accession>A0A455LRX2</accession>
<sequence>MARKVEKENGSGPIKSNHDLVRGVWQLFRLHTIEGLSTASIGWLALFFYATQQQLAFDLVRNAFIGIFATYQMTHCVFCLWNDICDRDFDGKVARTRDRPLPSGMVTLTEAMWVFVLGVFASMGVTYWLLGADVTLTMVPIWVLSFIYPLCKRIIWAPQVVLGLTMALCVLPPWVAVRKNSGSAGLLPASLFGAIFCWLVYLDLIYASQDRPDDQKAGVKSLAIFLGDYLKAGLTVLGVLQVVCFVLAASEASAGFLLWVFGIAVWSASVPWSIMSLDTRDRKSGGRIFLVNAILGIYMAAVSGLNVSLAMW</sequence>
<gene>
    <name evidence="5" type="primary">atnF</name>
</gene>
<reference key="1">
    <citation type="journal article" date="2018" name="Angew. Chem. Int. Ed.">
        <title>Genome mining and comparative biosynthesis of meroterpenoids from two phylogenetically distinct fungi.</title>
        <authorList>
            <person name="Zhang X."/>
            <person name="Wang T.T."/>
            <person name="Xu Q.L."/>
            <person name="Xiong Y."/>
            <person name="Zhang L."/>
            <person name="Han H."/>
            <person name="Xu K."/>
            <person name="Guo W.J."/>
            <person name="Xu Q."/>
            <person name="Tan R.X."/>
            <person name="Ge H.M."/>
        </authorList>
    </citation>
    <scope>NUCLEOTIDE SEQUENCE [MRNA]</scope>
    <scope>DISRUPTION PHENOTYPE</scope>
    <scope>FUNCTION</scope>
    <scope>PATHWAY</scope>
    <source>
        <strain>NF2194</strain>
    </source>
</reference>
<dbReference type="EC" id="2.5.1.-" evidence="7"/>
<dbReference type="EMBL" id="MH183012">
    <property type="protein sequence ID" value="AYO60879.1"/>
    <property type="molecule type" value="mRNA"/>
</dbReference>
<dbReference type="SMR" id="A0A455LRX2"/>
<dbReference type="GlyCosmos" id="A0A455LRX2">
    <property type="glycosylation" value="1 site, No reported glycans"/>
</dbReference>
<dbReference type="UniPathway" id="UPA00213"/>
<dbReference type="GO" id="GO:0005886">
    <property type="term" value="C:plasma membrane"/>
    <property type="evidence" value="ECO:0007669"/>
    <property type="project" value="TreeGrafter"/>
</dbReference>
<dbReference type="GO" id="GO:0016765">
    <property type="term" value="F:transferase activity, transferring alkyl or aryl (other than methyl) groups"/>
    <property type="evidence" value="ECO:0007669"/>
    <property type="project" value="InterPro"/>
</dbReference>
<dbReference type="GO" id="GO:0016114">
    <property type="term" value="P:terpenoid biosynthetic process"/>
    <property type="evidence" value="ECO:0007669"/>
    <property type="project" value="UniProtKB-UniPathway"/>
</dbReference>
<dbReference type="CDD" id="cd13959">
    <property type="entry name" value="PT_UbiA_COQ2"/>
    <property type="match status" value="1"/>
</dbReference>
<dbReference type="FunFam" id="1.20.120.1780:FF:000001">
    <property type="entry name" value="4-hydroxybenzoate octaprenyltransferase"/>
    <property type="match status" value="1"/>
</dbReference>
<dbReference type="Gene3D" id="1.10.357.140">
    <property type="entry name" value="UbiA prenyltransferase"/>
    <property type="match status" value="1"/>
</dbReference>
<dbReference type="Gene3D" id="1.20.120.1780">
    <property type="entry name" value="UbiA prenyltransferase"/>
    <property type="match status" value="1"/>
</dbReference>
<dbReference type="InterPro" id="IPR039653">
    <property type="entry name" value="Prenyltransferase"/>
</dbReference>
<dbReference type="InterPro" id="IPR000537">
    <property type="entry name" value="UbiA_prenyltransferase"/>
</dbReference>
<dbReference type="InterPro" id="IPR030470">
    <property type="entry name" value="UbiA_prenylTrfase_CS"/>
</dbReference>
<dbReference type="InterPro" id="IPR044878">
    <property type="entry name" value="UbiA_sf"/>
</dbReference>
<dbReference type="PANTHER" id="PTHR11048:SF28">
    <property type="entry name" value="4-HYDROXYBENZOATE POLYPRENYLTRANSFERASE, MITOCHONDRIAL"/>
    <property type="match status" value="1"/>
</dbReference>
<dbReference type="PANTHER" id="PTHR11048">
    <property type="entry name" value="PRENYLTRANSFERASES"/>
    <property type="match status" value="1"/>
</dbReference>
<dbReference type="Pfam" id="PF01040">
    <property type="entry name" value="UbiA"/>
    <property type="match status" value="1"/>
</dbReference>
<dbReference type="PROSITE" id="PS00943">
    <property type="entry name" value="UBIA"/>
    <property type="match status" value="1"/>
</dbReference>
<feature type="chain" id="PRO_0000452566" description="Polyprenyl transferase atnF">
    <location>
        <begin position="1"/>
        <end position="312"/>
    </location>
</feature>
<feature type="transmembrane region" description="Helical" evidence="2">
    <location>
        <begin position="30"/>
        <end position="50"/>
    </location>
</feature>
<feature type="transmembrane region" description="Helical" evidence="2">
    <location>
        <begin position="64"/>
        <end position="84"/>
    </location>
</feature>
<feature type="transmembrane region" description="Helical" evidence="2">
    <location>
        <begin position="111"/>
        <end position="131"/>
    </location>
</feature>
<feature type="transmembrane region" description="Helical" evidence="2">
    <location>
        <begin position="132"/>
        <end position="152"/>
    </location>
</feature>
<feature type="transmembrane region" description="Helical" evidence="2">
    <location>
        <begin position="154"/>
        <end position="174"/>
    </location>
</feature>
<feature type="transmembrane region" description="Helical" evidence="2">
    <location>
        <begin position="185"/>
        <end position="205"/>
    </location>
</feature>
<feature type="transmembrane region" description="Helical" evidence="2">
    <location>
        <begin position="229"/>
        <end position="249"/>
    </location>
</feature>
<feature type="transmembrane region" description="Helical" evidence="2">
    <location>
        <begin position="255"/>
        <end position="275"/>
    </location>
</feature>
<feature type="transmembrane region" description="Helical" evidence="2">
    <location>
        <begin position="288"/>
        <end position="308"/>
    </location>
</feature>
<feature type="glycosylation site" description="N-linked (GlcNAc...) asparagine" evidence="3">
    <location>
        <position position="9"/>
    </location>
</feature>
<comment type="function">
    <text evidence="4 7">Polyprenyl transferase; part of the gene cluster that mediates the biosynthesis of the meroterpenoids arthripenoids (PubMed:29797385). The pathway begins with the HR-PKS atnH that catalyzes two chain-extension steps to form a reduced triketide, which then primes the SAT domain in the NR-PKS atnG to initiate three more cycles of extension to give a linear hexaketide corresponding to the polyketide part of arthripenoids (PubMed:29797385). The FAD-dependent monooxygenase atnJ then performs an oxidative decarboxylation at C11 of the atnH/atnG product, via an electrophilic aromatic hydroxylation with concomitant ipso-decarboxylation (PubMed:29797385). The membrane-bound polyprenyl transferase atnF then introduces a farnesyl group before the FAD-dependent monooxygenase atnK functions as the first epoxidase on terminal C12'-C13' olefin, followed by a second epoxidation on C7'-C8' catalyzed by atnA (PubMed:29797385). The terpene cyclase/mutase atnI then initiates the sequential tricyclic ring formation through protonation of the terminal epoxide and catalyzes the regioselective and stereoselective 6/6/6-tricyclic ring formation (PubMed:29797385). The cytochrome P450 monooxygenase atnM is responsible for hydroxylating both C1' and C10' (Probable). The next steps may involve ketoreduction and acetyl transfer by the ketoreductase atnB and the acetyltransferase atnC, and lead to the production of arthripenoid B, the final biosynthetic product of the atn cluster (PubMed:29797385). The hydroquinone moiety in arthripenoid B is prone to undergo spontaneous oxidation to afford a benzoquinone compound, a key intermediate for generating structure diversity (Probable). For instance, addition of a cysteine followed by ring contraction gives arthripenoid A, tautomerization gives the main product arthripenoid C, addition of a molecular of water or amine affords arthripenoid D or E, respectively, and loss of one water forms arthripenoid F (Probable).</text>
</comment>
<comment type="cofactor">
    <cofactor evidence="1">
        <name>Mg(2+)</name>
        <dbReference type="ChEBI" id="CHEBI:18420"/>
    </cofactor>
</comment>
<comment type="pathway">
    <text evidence="4">Secondary metabolite biosynthesis; terpenoid biosynthesis.</text>
</comment>
<comment type="subcellular location">
    <subcellularLocation>
        <location evidence="2">Membrane</location>
        <topology evidence="2">Multi-pass membrane protein</topology>
    </subcellularLocation>
</comment>
<comment type="disruption phenotype">
    <text evidence="4">Abolishes the production of arthripenoids.</text>
</comment>
<comment type="similarity">
    <text evidence="6">Belongs to the UbiA prenyltransferase family.</text>
</comment>